<sequence>MSIARRTTLSKFLIEQQRETNNLPADLRLLIEVVARACKAISYNVSKGALGEALGTAGSENVQGEVQKKLDILSNEILLDANEWGGNLAAMASEEMETFFPIPANYPRGEYLLVFDPLDGSSNIDVNVSIGTIFSVLRCPDGKQATEESFLQPGTEQVAAGYAVYGPQTVFVLTTGNGVNCFTLDREVGSWVLTQSNMQIPADTREYAINASNARHWYEPVQRYVDELNAGKDGPRGDNFNMRWIASMVADVHRILNRGGIFMYPADKRTPDRPGKLRLMYEANPMSFIVEQAGGAATTGTQRIMEVQPTGLHQRVPVFLGSKNEVERVTSYHAEGEGK</sequence>
<gene>
    <name evidence="1" type="primary">fbp</name>
    <name type="ordered locus">BamMC406_0889</name>
</gene>
<evidence type="ECO:0000255" key="1">
    <source>
        <dbReference type="HAMAP-Rule" id="MF_01855"/>
    </source>
</evidence>
<accession>B1YUZ7</accession>
<name>F16PA_BURA4</name>
<dbReference type="EC" id="3.1.3.11" evidence="1"/>
<dbReference type="EMBL" id="CP001025">
    <property type="protein sequence ID" value="ACB63380.1"/>
    <property type="molecule type" value="Genomic_DNA"/>
</dbReference>
<dbReference type="RefSeq" id="WP_012363316.1">
    <property type="nucleotide sequence ID" value="NC_010551.1"/>
</dbReference>
<dbReference type="SMR" id="B1YUZ7"/>
<dbReference type="KEGG" id="bac:BamMC406_0889"/>
<dbReference type="HOGENOM" id="CLU_039977_0_0_4"/>
<dbReference type="OrthoDB" id="9806756at2"/>
<dbReference type="UniPathway" id="UPA00138"/>
<dbReference type="Proteomes" id="UP000001680">
    <property type="component" value="Chromosome 1"/>
</dbReference>
<dbReference type="GO" id="GO:0005829">
    <property type="term" value="C:cytosol"/>
    <property type="evidence" value="ECO:0007669"/>
    <property type="project" value="TreeGrafter"/>
</dbReference>
<dbReference type="GO" id="GO:0042132">
    <property type="term" value="F:fructose 1,6-bisphosphate 1-phosphatase activity"/>
    <property type="evidence" value="ECO:0007669"/>
    <property type="project" value="UniProtKB-UniRule"/>
</dbReference>
<dbReference type="GO" id="GO:0000287">
    <property type="term" value="F:magnesium ion binding"/>
    <property type="evidence" value="ECO:0007669"/>
    <property type="project" value="UniProtKB-UniRule"/>
</dbReference>
<dbReference type="GO" id="GO:0030388">
    <property type="term" value="P:fructose 1,6-bisphosphate metabolic process"/>
    <property type="evidence" value="ECO:0007669"/>
    <property type="project" value="TreeGrafter"/>
</dbReference>
<dbReference type="GO" id="GO:0006002">
    <property type="term" value="P:fructose 6-phosphate metabolic process"/>
    <property type="evidence" value="ECO:0007669"/>
    <property type="project" value="TreeGrafter"/>
</dbReference>
<dbReference type="GO" id="GO:0006000">
    <property type="term" value="P:fructose metabolic process"/>
    <property type="evidence" value="ECO:0007669"/>
    <property type="project" value="TreeGrafter"/>
</dbReference>
<dbReference type="GO" id="GO:0006094">
    <property type="term" value="P:gluconeogenesis"/>
    <property type="evidence" value="ECO:0007669"/>
    <property type="project" value="UniProtKB-UniRule"/>
</dbReference>
<dbReference type="GO" id="GO:0005986">
    <property type="term" value="P:sucrose biosynthetic process"/>
    <property type="evidence" value="ECO:0007669"/>
    <property type="project" value="TreeGrafter"/>
</dbReference>
<dbReference type="CDD" id="cd00354">
    <property type="entry name" value="FBPase"/>
    <property type="match status" value="1"/>
</dbReference>
<dbReference type="FunFam" id="3.30.540.10:FF:000006">
    <property type="entry name" value="Fructose-1,6-bisphosphatase class 1"/>
    <property type="match status" value="1"/>
</dbReference>
<dbReference type="FunFam" id="3.40.190.80:FF:000011">
    <property type="entry name" value="Fructose-1,6-bisphosphatase class 1"/>
    <property type="match status" value="1"/>
</dbReference>
<dbReference type="Gene3D" id="3.40.190.80">
    <property type="match status" value="1"/>
</dbReference>
<dbReference type="Gene3D" id="3.30.540.10">
    <property type="entry name" value="Fructose-1,6-Bisphosphatase, subunit A, domain 1"/>
    <property type="match status" value="1"/>
</dbReference>
<dbReference type="HAMAP" id="MF_01855">
    <property type="entry name" value="FBPase_class1"/>
    <property type="match status" value="1"/>
</dbReference>
<dbReference type="InterPro" id="IPR044015">
    <property type="entry name" value="FBPase_C_dom"/>
</dbReference>
<dbReference type="InterPro" id="IPR000146">
    <property type="entry name" value="FBPase_class-1"/>
</dbReference>
<dbReference type="InterPro" id="IPR033391">
    <property type="entry name" value="FBPase_N"/>
</dbReference>
<dbReference type="InterPro" id="IPR028343">
    <property type="entry name" value="FBPtase"/>
</dbReference>
<dbReference type="NCBIfam" id="NF006778">
    <property type="entry name" value="PRK09293.1-1"/>
    <property type="match status" value="1"/>
</dbReference>
<dbReference type="NCBIfam" id="NF006779">
    <property type="entry name" value="PRK09293.1-3"/>
    <property type="match status" value="1"/>
</dbReference>
<dbReference type="NCBIfam" id="NF006780">
    <property type="entry name" value="PRK09293.1-4"/>
    <property type="match status" value="1"/>
</dbReference>
<dbReference type="PANTHER" id="PTHR11556">
    <property type="entry name" value="FRUCTOSE-1,6-BISPHOSPHATASE-RELATED"/>
    <property type="match status" value="1"/>
</dbReference>
<dbReference type="PANTHER" id="PTHR11556:SF35">
    <property type="entry name" value="SEDOHEPTULOSE-1,7-BISPHOSPHATASE, CHLOROPLASTIC"/>
    <property type="match status" value="1"/>
</dbReference>
<dbReference type="Pfam" id="PF00316">
    <property type="entry name" value="FBPase"/>
    <property type="match status" value="1"/>
</dbReference>
<dbReference type="Pfam" id="PF18913">
    <property type="entry name" value="FBPase_C"/>
    <property type="match status" value="1"/>
</dbReference>
<dbReference type="PIRSF" id="PIRSF500210">
    <property type="entry name" value="FBPtase"/>
    <property type="match status" value="1"/>
</dbReference>
<dbReference type="PIRSF" id="PIRSF000904">
    <property type="entry name" value="FBPtase_SBPase"/>
    <property type="match status" value="1"/>
</dbReference>
<dbReference type="PRINTS" id="PR00115">
    <property type="entry name" value="F16BPHPHTASE"/>
</dbReference>
<dbReference type="SUPFAM" id="SSF56655">
    <property type="entry name" value="Carbohydrate phosphatase"/>
    <property type="match status" value="1"/>
</dbReference>
<protein>
    <recommendedName>
        <fullName evidence="1">Fructose-1,6-bisphosphatase class 1</fullName>
        <shortName evidence="1">FBPase class 1</shortName>
        <ecNumber evidence="1">3.1.3.11</ecNumber>
    </recommendedName>
    <alternativeName>
        <fullName evidence="1">D-fructose-1,6-bisphosphate 1-phosphohydrolase class 1</fullName>
    </alternativeName>
</protein>
<feature type="chain" id="PRO_0000364485" description="Fructose-1,6-bisphosphatase class 1">
    <location>
        <begin position="1"/>
        <end position="339"/>
    </location>
</feature>
<feature type="binding site" evidence="1">
    <location>
        <position position="94"/>
    </location>
    <ligand>
        <name>Mg(2+)</name>
        <dbReference type="ChEBI" id="CHEBI:18420"/>
        <label>1</label>
    </ligand>
</feature>
<feature type="binding site" evidence="1">
    <location>
        <position position="116"/>
    </location>
    <ligand>
        <name>Mg(2+)</name>
        <dbReference type="ChEBI" id="CHEBI:18420"/>
        <label>1</label>
    </ligand>
</feature>
<feature type="binding site" evidence="1">
    <location>
        <position position="116"/>
    </location>
    <ligand>
        <name>Mg(2+)</name>
        <dbReference type="ChEBI" id="CHEBI:18420"/>
        <label>2</label>
    </ligand>
</feature>
<feature type="binding site" evidence="1">
    <location>
        <position position="118"/>
    </location>
    <ligand>
        <name>Mg(2+)</name>
        <dbReference type="ChEBI" id="CHEBI:18420"/>
        <label>1</label>
    </ligand>
</feature>
<feature type="binding site" evidence="1">
    <location>
        <begin position="119"/>
        <end position="122"/>
    </location>
    <ligand>
        <name>substrate</name>
    </ligand>
</feature>
<feature type="binding site" evidence="1">
    <location>
        <position position="119"/>
    </location>
    <ligand>
        <name>Mg(2+)</name>
        <dbReference type="ChEBI" id="CHEBI:18420"/>
        <label>2</label>
    </ligand>
</feature>
<feature type="binding site" evidence="1">
    <location>
        <position position="210"/>
    </location>
    <ligand>
        <name>substrate</name>
    </ligand>
</feature>
<feature type="binding site" evidence="1">
    <location>
        <position position="276"/>
    </location>
    <ligand>
        <name>substrate</name>
    </ligand>
</feature>
<feature type="binding site" evidence="1">
    <location>
        <position position="282"/>
    </location>
    <ligand>
        <name>Mg(2+)</name>
        <dbReference type="ChEBI" id="CHEBI:18420"/>
        <label>2</label>
    </ligand>
</feature>
<organism>
    <name type="scientific">Burkholderia ambifaria (strain MC40-6)</name>
    <dbReference type="NCBI Taxonomy" id="398577"/>
    <lineage>
        <taxon>Bacteria</taxon>
        <taxon>Pseudomonadati</taxon>
        <taxon>Pseudomonadota</taxon>
        <taxon>Betaproteobacteria</taxon>
        <taxon>Burkholderiales</taxon>
        <taxon>Burkholderiaceae</taxon>
        <taxon>Burkholderia</taxon>
        <taxon>Burkholderia cepacia complex</taxon>
    </lineage>
</organism>
<proteinExistence type="inferred from homology"/>
<reference key="1">
    <citation type="submission" date="2008-04" db="EMBL/GenBank/DDBJ databases">
        <title>Complete sequence of chromosome 1 of Burkholderia ambifaria MC40-6.</title>
        <authorList>
            <person name="Copeland A."/>
            <person name="Lucas S."/>
            <person name="Lapidus A."/>
            <person name="Glavina del Rio T."/>
            <person name="Dalin E."/>
            <person name="Tice H."/>
            <person name="Pitluck S."/>
            <person name="Chain P."/>
            <person name="Malfatti S."/>
            <person name="Shin M."/>
            <person name="Vergez L."/>
            <person name="Lang D."/>
            <person name="Schmutz J."/>
            <person name="Larimer F."/>
            <person name="Land M."/>
            <person name="Hauser L."/>
            <person name="Kyrpides N."/>
            <person name="Lykidis A."/>
            <person name="Ramette A."/>
            <person name="Konstantinidis K."/>
            <person name="Tiedje J."/>
            <person name="Richardson P."/>
        </authorList>
    </citation>
    <scope>NUCLEOTIDE SEQUENCE [LARGE SCALE GENOMIC DNA]</scope>
    <source>
        <strain>MC40-6</strain>
    </source>
</reference>
<comment type="catalytic activity">
    <reaction evidence="1">
        <text>beta-D-fructose 1,6-bisphosphate + H2O = beta-D-fructose 6-phosphate + phosphate</text>
        <dbReference type="Rhea" id="RHEA:11064"/>
        <dbReference type="ChEBI" id="CHEBI:15377"/>
        <dbReference type="ChEBI" id="CHEBI:32966"/>
        <dbReference type="ChEBI" id="CHEBI:43474"/>
        <dbReference type="ChEBI" id="CHEBI:57634"/>
        <dbReference type="EC" id="3.1.3.11"/>
    </reaction>
</comment>
<comment type="cofactor">
    <cofactor evidence="1">
        <name>Mg(2+)</name>
        <dbReference type="ChEBI" id="CHEBI:18420"/>
    </cofactor>
    <text evidence="1">Binds 2 magnesium ions per subunit.</text>
</comment>
<comment type="pathway">
    <text evidence="1">Carbohydrate biosynthesis; gluconeogenesis.</text>
</comment>
<comment type="subunit">
    <text evidence="1">Homotetramer.</text>
</comment>
<comment type="subcellular location">
    <subcellularLocation>
        <location evidence="1">Cytoplasm</location>
    </subcellularLocation>
</comment>
<comment type="similarity">
    <text evidence="1">Belongs to the FBPase class 1 family.</text>
</comment>
<keyword id="KW-0119">Carbohydrate metabolism</keyword>
<keyword id="KW-0963">Cytoplasm</keyword>
<keyword id="KW-0378">Hydrolase</keyword>
<keyword id="KW-0460">Magnesium</keyword>
<keyword id="KW-0479">Metal-binding</keyword>